<dbReference type="EC" id="2.4.99.28" evidence="1"/>
<dbReference type="EMBL" id="CP000282">
    <property type="protein sequence ID" value="ABD80109.1"/>
    <property type="molecule type" value="Genomic_DNA"/>
</dbReference>
<dbReference type="RefSeq" id="WP_011467330.1">
    <property type="nucleotide sequence ID" value="NC_007912.1"/>
</dbReference>
<dbReference type="SMR" id="Q21MH0"/>
<dbReference type="STRING" id="203122.Sde_0847"/>
<dbReference type="GeneID" id="98612529"/>
<dbReference type="KEGG" id="sde:Sde_0847"/>
<dbReference type="eggNOG" id="COG0772">
    <property type="taxonomic scope" value="Bacteria"/>
</dbReference>
<dbReference type="HOGENOM" id="CLU_029243_1_1_6"/>
<dbReference type="OrthoDB" id="9768187at2"/>
<dbReference type="UniPathway" id="UPA00219"/>
<dbReference type="Proteomes" id="UP000001947">
    <property type="component" value="Chromosome"/>
</dbReference>
<dbReference type="GO" id="GO:0032153">
    <property type="term" value="C:cell division site"/>
    <property type="evidence" value="ECO:0007669"/>
    <property type="project" value="UniProtKB-UniRule"/>
</dbReference>
<dbReference type="GO" id="GO:0005886">
    <property type="term" value="C:plasma membrane"/>
    <property type="evidence" value="ECO:0007669"/>
    <property type="project" value="UniProtKB-SubCell"/>
</dbReference>
<dbReference type="GO" id="GO:0015648">
    <property type="term" value="F:lipid-linked peptidoglycan transporter activity"/>
    <property type="evidence" value="ECO:0007669"/>
    <property type="project" value="TreeGrafter"/>
</dbReference>
<dbReference type="GO" id="GO:0008955">
    <property type="term" value="F:peptidoglycan glycosyltransferase activity"/>
    <property type="evidence" value="ECO:0007669"/>
    <property type="project" value="UniProtKB-UniRule"/>
</dbReference>
<dbReference type="GO" id="GO:0071555">
    <property type="term" value="P:cell wall organization"/>
    <property type="evidence" value="ECO:0007669"/>
    <property type="project" value="UniProtKB-KW"/>
</dbReference>
<dbReference type="GO" id="GO:0043093">
    <property type="term" value="P:FtsZ-dependent cytokinesis"/>
    <property type="evidence" value="ECO:0007669"/>
    <property type="project" value="UniProtKB-UniRule"/>
</dbReference>
<dbReference type="GO" id="GO:0009252">
    <property type="term" value="P:peptidoglycan biosynthetic process"/>
    <property type="evidence" value="ECO:0007669"/>
    <property type="project" value="UniProtKB-UniRule"/>
</dbReference>
<dbReference type="GO" id="GO:0008360">
    <property type="term" value="P:regulation of cell shape"/>
    <property type="evidence" value="ECO:0007669"/>
    <property type="project" value="UniProtKB-KW"/>
</dbReference>
<dbReference type="HAMAP" id="MF_00913">
    <property type="entry name" value="PGT_FtsW_proteobact"/>
    <property type="match status" value="1"/>
</dbReference>
<dbReference type="InterPro" id="IPR013437">
    <property type="entry name" value="FtsW"/>
</dbReference>
<dbReference type="InterPro" id="IPR001182">
    <property type="entry name" value="FtsW/RodA"/>
</dbReference>
<dbReference type="NCBIfam" id="TIGR02614">
    <property type="entry name" value="ftsW"/>
    <property type="match status" value="1"/>
</dbReference>
<dbReference type="PANTHER" id="PTHR30474">
    <property type="entry name" value="CELL CYCLE PROTEIN"/>
    <property type="match status" value="1"/>
</dbReference>
<dbReference type="PANTHER" id="PTHR30474:SF2">
    <property type="entry name" value="PEPTIDOGLYCAN GLYCOSYLTRANSFERASE FTSW-RELATED"/>
    <property type="match status" value="1"/>
</dbReference>
<dbReference type="Pfam" id="PF01098">
    <property type="entry name" value="FTSW_RODA_SPOVE"/>
    <property type="match status" value="1"/>
</dbReference>
<comment type="function">
    <text evidence="1">Peptidoglycan polymerase that is essential for cell division.</text>
</comment>
<comment type="catalytic activity">
    <reaction evidence="1">
        <text>[GlcNAc-(1-&gt;4)-Mur2Ac(oyl-L-Ala-gamma-D-Glu-L-Lys-D-Ala-D-Ala)](n)-di-trans,octa-cis-undecaprenyl diphosphate + beta-D-GlcNAc-(1-&gt;4)-Mur2Ac(oyl-L-Ala-gamma-D-Glu-L-Lys-D-Ala-D-Ala)-di-trans,octa-cis-undecaprenyl diphosphate = [GlcNAc-(1-&gt;4)-Mur2Ac(oyl-L-Ala-gamma-D-Glu-L-Lys-D-Ala-D-Ala)](n+1)-di-trans,octa-cis-undecaprenyl diphosphate + di-trans,octa-cis-undecaprenyl diphosphate + H(+)</text>
        <dbReference type="Rhea" id="RHEA:23708"/>
        <dbReference type="Rhea" id="RHEA-COMP:9602"/>
        <dbReference type="Rhea" id="RHEA-COMP:9603"/>
        <dbReference type="ChEBI" id="CHEBI:15378"/>
        <dbReference type="ChEBI" id="CHEBI:58405"/>
        <dbReference type="ChEBI" id="CHEBI:60033"/>
        <dbReference type="ChEBI" id="CHEBI:78435"/>
        <dbReference type="EC" id="2.4.99.28"/>
    </reaction>
</comment>
<comment type="pathway">
    <text evidence="1">Cell wall biogenesis; peptidoglycan biosynthesis.</text>
</comment>
<comment type="subcellular location">
    <subcellularLocation>
        <location evidence="1">Cell inner membrane</location>
        <topology evidence="1">Multi-pass membrane protein</topology>
    </subcellularLocation>
    <text evidence="1">Localizes to the division septum.</text>
</comment>
<comment type="similarity">
    <text evidence="1">Belongs to the SEDS family. FtsW subfamily.</text>
</comment>
<name>FTSW_SACD2</name>
<evidence type="ECO:0000255" key="1">
    <source>
        <dbReference type="HAMAP-Rule" id="MF_00913"/>
    </source>
</evidence>
<proteinExistence type="inferred from homology"/>
<organism>
    <name type="scientific">Saccharophagus degradans (strain 2-40 / ATCC 43961 / DSM 17024)</name>
    <dbReference type="NCBI Taxonomy" id="203122"/>
    <lineage>
        <taxon>Bacteria</taxon>
        <taxon>Pseudomonadati</taxon>
        <taxon>Pseudomonadota</taxon>
        <taxon>Gammaproteobacteria</taxon>
        <taxon>Cellvibrionales</taxon>
        <taxon>Cellvibrionaceae</taxon>
        <taxon>Saccharophagus</taxon>
    </lineage>
</organism>
<accession>Q21MH0</accession>
<sequence>MIVNIASPLYGSVQGFRRLDFSLYATVAILISVGIVMVASSSLDFAAERYHDTWFFVRKQITFLAMGLVGGLVILAVPMSVWNKYSGLLLILAFFLLMAVLIPGIGKVVNGSRRWLSLGPFSMQASEIAKFCLIVYFASYLARRNEELRTQWSGFLKLTAVLLIIVLLLLLEPDFGSSVVISATLGCMMFVAGVPLARFLLLAVSGVAGLALMAVASPYRWERLVAFMDPWATQFDSGYQLVQSLIAFGRGGWFGVGLGNSLQKLFFLPEAHTDFIFAIFTEEFGFIGAIALIGVFGFFLYRLVILFRRASEQEQFFSSYVVFGIGVMLAMQAFINMGVASGFLPTKGLTLPFISYGGSSLLITCGLMALVFRVNLELNRENQEGKP</sequence>
<reference key="1">
    <citation type="journal article" date="2008" name="PLoS Genet.">
        <title>Complete genome sequence of the complex carbohydrate-degrading marine bacterium, Saccharophagus degradans strain 2-40 T.</title>
        <authorList>
            <person name="Weiner R.M."/>
            <person name="Taylor L.E. II"/>
            <person name="Henrissat B."/>
            <person name="Hauser L."/>
            <person name="Land M."/>
            <person name="Coutinho P.M."/>
            <person name="Rancurel C."/>
            <person name="Saunders E.H."/>
            <person name="Longmire A.G."/>
            <person name="Zhang H."/>
            <person name="Bayer E.A."/>
            <person name="Gilbert H.J."/>
            <person name="Larimer F."/>
            <person name="Zhulin I.B."/>
            <person name="Ekborg N.A."/>
            <person name="Lamed R."/>
            <person name="Richardson P.M."/>
            <person name="Borovok I."/>
            <person name="Hutcheson S."/>
        </authorList>
    </citation>
    <scope>NUCLEOTIDE SEQUENCE [LARGE SCALE GENOMIC DNA]</scope>
    <source>
        <strain>2-40 / ATCC 43961 / DSM 17024</strain>
    </source>
</reference>
<gene>
    <name evidence="1" type="primary">ftsW</name>
    <name type="ordered locus">Sde_0847</name>
</gene>
<keyword id="KW-0131">Cell cycle</keyword>
<keyword id="KW-0132">Cell division</keyword>
<keyword id="KW-0997">Cell inner membrane</keyword>
<keyword id="KW-1003">Cell membrane</keyword>
<keyword id="KW-0133">Cell shape</keyword>
<keyword id="KW-0961">Cell wall biogenesis/degradation</keyword>
<keyword id="KW-0328">Glycosyltransferase</keyword>
<keyword id="KW-0472">Membrane</keyword>
<keyword id="KW-0573">Peptidoglycan synthesis</keyword>
<keyword id="KW-1185">Reference proteome</keyword>
<keyword id="KW-0808">Transferase</keyword>
<keyword id="KW-0812">Transmembrane</keyword>
<keyword id="KW-1133">Transmembrane helix</keyword>
<feature type="chain" id="PRO_0000415211" description="Probable peptidoglycan glycosyltransferase FtsW">
    <location>
        <begin position="1"/>
        <end position="387"/>
    </location>
</feature>
<feature type="transmembrane region" description="Helical" evidence="1">
    <location>
        <begin position="19"/>
        <end position="39"/>
    </location>
</feature>
<feature type="transmembrane region" description="Helical" evidence="1">
    <location>
        <begin position="61"/>
        <end position="81"/>
    </location>
</feature>
<feature type="transmembrane region" description="Helical" evidence="1">
    <location>
        <begin position="86"/>
        <end position="106"/>
    </location>
</feature>
<feature type="transmembrane region" description="Helical" evidence="1">
    <location>
        <begin position="118"/>
        <end position="138"/>
    </location>
</feature>
<feature type="transmembrane region" description="Helical" evidence="1">
    <location>
        <begin position="161"/>
        <end position="181"/>
    </location>
</feature>
<feature type="transmembrane region" description="Helical" evidence="1">
    <location>
        <begin position="199"/>
        <end position="219"/>
    </location>
</feature>
<feature type="transmembrane region" description="Helical" evidence="1">
    <location>
        <begin position="286"/>
        <end position="306"/>
    </location>
</feature>
<feature type="transmembrane region" description="Helical" evidence="1">
    <location>
        <begin position="320"/>
        <end position="340"/>
    </location>
</feature>
<feature type="transmembrane region" description="Helical" evidence="1">
    <location>
        <begin position="352"/>
        <end position="372"/>
    </location>
</feature>
<protein>
    <recommendedName>
        <fullName evidence="1">Probable peptidoglycan glycosyltransferase FtsW</fullName>
        <shortName evidence="1">PGT</shortName>
        <ecNumber evidence="1">2.4.99.28</ecNumber>
    </recommendedName>
    <alternativeName>
        <fullName evidence="1">Cell division protein FtsW</fullName>
    </alternativeName>
    <alternativeName>
        <fullName evidence="1">Cell wall polymerase</fullName>
    </alternativeName>
    <alternativeName>
        <fullName evidence="1">Peptidoglycan polymerase</fullName>
        <shortName evidence="1">PG polymerase</shortName>
    </alternativeName>
</protein>